<gene>
    <name type="primary">FAM151A</name>
</gene>
<evidence type="ECO:0000255" key="1"/>
<evidence type="ECO:0000305" key="2"/>
<sequence length="585" mass="63905">MVCREQLSKNQVKWVFASITCVSAVAIAAIVLAITLRRPGCELEACSPDADMLDYLLSLGQISRRDALEVTWYHAANSKEAMTAALNSNITVLEADVNVEGLGTANETGVPIMAHPPAIYSDNTLEQWLDAVLGSSQKGIKLDFKNIKAVGPSLDLLRRLTEEGKVRRPIWINADILKGPNMLISTEVNATQFLALVREKYPKATLSPGWTTFYVSTSPNTTYTRAMVEKMHELVGGVPQRVTFPVRSSMVRAAWPHFSWLLSQSERYSLTLWQAASDPMSVEDLLYVRDNTAVHQVYYDIFEPLLSQFKQLALNATRKPMYYTGGSLIPLLQLPGDDGLNVEWLVPDVQGSGKTATMTLPDTEGMILLNTGLEGTVSENPVPIVHTPSGSILTLESCLQQLATHPGHWGIHLQIAEPAALRPSLALLARLSSLGLLHWPVWVGAKISHGSFSVPGHVAGRELLTAVAEVFPDVTVAPGWPEEVLGSGYREQLLTDMLELCQGLWQPVSFQMQAMLLGHSTAGAIARLLASSPRATVTVEYDPAGGDYASVRTALLAARAVDSTRVYYRLPQGYRKDLLADVGRN</sequence>
<keyword id="KW-0472">Membrane</keyword>
<keyword id="KW-1185">Reference proteome</keyword>
<keyword id="KW-0812">Transmembrane</keyword>
<keyword id="KW-1133">Transmembrane helix</keyword>
<protein>
    <recommendedName>
        <fullName>Protein FAM151A</fullName>
    </recommendedName>
</protein>
<reference key="1">
    <citation type="submission" date="2004-11" db="EMBL/GenBank/DDBJ databases">
        <authorList>
            <consortium name="The German cDNA consortium"/>
        </authorList>
    </citation>
    <scope>NUCLEOTIDE SEQUENCE [LARGE SCALE MRNA]</scope>
    <source>
        <tissue>Kidney</tissue>
    </source>
</reference>
<comment type="subcellular location">
    <subcellularLocation>
        <location evidence="2">Membrane</location>
        <topology evidence="2">Single-pass membrane protein</topology>
    </subcellularLocation>
</comment>
<comment type="similarity">
    <text evidence="2">Belongs to the menorin family.</text>
</comment>
<name>F151A_PONAB</name>
<feature type="chain" id="PRO_0000310957" description="Protein FAM151A">
    <location>
        <begin position="1"/>
        <end position="585"/>
    </location>
</feature>
<feature type="transmembrane region" description="Helical" evidence="1">
    <location>
        <begin position="14"/>
        <end position="34"/>
    </location>
</feature>
<organism>
    <name type="scientific">Pongo abelii</name>
    <name type="common">Sumatran orangutan</name>
    <name type="synonym">Pongo pygmaeus abelii</name>
    <dbReference type="NCBI Taxonomy" id="9601"/>
    <lineage>
        <taxon>Eukaryota</taxon>
        <taxon>Metazoa</taxon>
        <taxon>Chordata</taxon>
        <taxon>Craniata</taxon>
        <taxon>Vertebrata</taxon>
        <taxon>Euteleostomi</taxon>
        <taxon>Mammalia</taxon>
        <taxon>Eutheria</taxon>
        <taxon>Euarchontoglires</taxon>
        <taxon>Primates</taxon>
        <taxon>Haplorrhini</taxon>
        <taxon>Catarrhini</taxon>
        <taxon>Hominidae</taxon>
        <taxon>Pongo</taxon>
    </lineage>
</organism>
<dbReference type="EMBL" id="CR857752">
    <property type="protein sequence ID" value="CAH90018.1"/>
    <property type="molecule type" value="mRNA"/>
</dbReference>
<dbReference type="RefSeq" id="NP_001124958.1">
    <property type="nucleotide sequence ID" value="NM_001131486.1"/>
</dbReference>
<dbReference type="FunCoup" id="Q5RDY9">
    <property type="interactions" value="66"/>
</dbReference>
<dbReference type="GeneID" id="100171831"/>
<dbReference type="KEGG" id="pon:100171831"/>
<dbReference type="CTD" id="338094"/>
<dbReference type="eggNOG" id="KOG3748">
    <property type="taxonomic scope" value="Eukaryota"/>
</dbReference>
<dbReference type="InParanoid" id="Q5RDY9"/>
<dbReference type="OrthoDB" id="3184331at2759"/>
<dbReference type="Proteomes" id="UP000001595">
    <property type="component" value="Unplaced"/>
</dbReference>
<dbReference type="GO" id="GO:0005615">
    <property type="term" value="C:extracellular space"/>
    <property type="evidence" value="ECO:0007669"/>
    <property type="project" value="TreeGrafter"/>
</dbReference>
<dbReference type="GO" id="GO:0016020">
    <property type="term" value="C:membrane"/>
    <property type="evidence" value="ECO:0007669"/>
    <property type="project" value="UniProtKB-SubCell"/>
</dbReference>
<dbReference type="InterPro" id="IPR019356">
    <property type="entry name" value="Memorin"/>
</dbReference>
<dbReference type="PANTHER" id="PTHR21184">
    <property type="entry name" value="MENORIN (DENDRITIC BRANCHING PROTEIN)"/>
    <property type="match status" value="1"/>
</dbReference>
<dbReference type="PANTHER" id="PTHR21184:SF4">
    <property type="entry name" value="PROTEIN FAM151A"/>
    <property type="match status" value="1"/>
</dbReference>
<dbReference type="Pfam" id="PF10223">
    <property type="entry name" value="Menorin"/>
    <property type="match status" value="2"/>
</dbReference>
<accession>Q5RDY9</accession>
<proteinExistence type="evidence at transcript level"/>